<accession>Q9CM79</accession>
<protein>
    <recommendedName>
        <fullName evidence="1">Ribosomal RNA small subunit methyltransferase C</fullName>
        <ecNumber evidence="1">2.1.1.172</ecNumber>
    </recommendedName>
    <alternativeName>
        <fullName evidence="1">16S rRNA m2G1207 methyltransferase</fullName>
    </alternativeName>
    <alternativeName>
        <fullName evidence="1">rRNA (guanine-N(2)-)-methyltransferase RsmC</fullName>
    </alternativeName>
</protein>
<organism>
    <name type="scientific">Pasteurella multocida (strain Pm70)</name>
    <dbReference type="NCBI Taxonomy" id="272843"/>
    <lineage>
        <taxon>Bacteria</taxon>
        <taxon>Pseudomonadati</taxon>
        <taxon>Pseudomonadota</taxon>
        <taxon>Gammaproteobacteria</taxon>
        <taxon>Pasteurellales</taxon>
        <taxon>Pasteurellaceae</taxon>
        <taxon>Pasteurella</taxon>
    </lineage>
</organism>
<gene>
    <name evidence="1" type="primary">rsmC</name>
    <name type="ordered locus">PM0958</name>
</gene>
<name>RSMC_PASMU</name>
<dbReference type="EC" id="2.1.1.172" evidence="1"/>
<dbReference type="EMBL" id="AE004439">
    <property type="protein sequence ID" value="AAK03042.1"/>
    <property type="molecule type" value="Genomic_DNA"/>
</dbReference>
<dbReference type="RefSeq" id="WP_010906941.1">
    <property type="nucleotide sequence ID" value="NC_002663.1"/>
</dbReference>
<dbReference type="SMR" id="Q9CM79"/>
<dbReference type="STRING" id="272843.PM0958"/>
<dbReference type="EnsemblBacteria" id="AAK03042">
    <property type="protein sequence ID" value="AAK03042"/>
    <property type="gene ID" value="PM0958"/>
</dbReference>
<dbReference type="KEGG" id="pmu:PM0958"/>
<dbReference type="PATRIC" id="fig|272843.6.peg.970"/>
<dbReference type="HOGENOM" id="CLU_049581_0_1_6"/>
<dbReference type="OrthoDB" id="9816072at2"/>
<dbReference type="Proteomes" id="UP000000809">
    <property type="component" value="Chromosome"/>
</dbReference>
<dbReference type="GO" id="GO:0005737">
    <property type="term" value="C:cytoplasm"/>
    <property type="evidence" value="ECO:0007669"/>
    <property type="project" value="UniProtKB-SubCell"/>
</dbReference>
<dbReference type="GO" id="GO:0052914">
    <property type="term" value="F:16S rRNA (guanine(1207)-N(2))-methyltransferase activity"/>
    <property type="evidence" value="ECO:0007669"/>
    <property type="project" value="UniProtKB-EC"/>
</dbReference>
<dbReference type="GO" id="GO:0003676">
    <property type="term" value="F:nucleic acid binding"/>
    <property type="evidence" value="ECO:0007669"/>
    <property type="project" value="InterPro"/>
</dbReference>
<dbReference type="CDD" id="cd02440">
    <property type="entry name" value="AdoMet_MTases"/>
    <property type="match status" value="1"/>
</dbReference>
<dbReference type="Gene3D" id="3.40.50.150">
    <property type="entry name" value="Vaccinia Virus protein VP39"/>
    <property type="match status" value="2"/>
</dbReference>
<dbReference type="HAMAP" id="MF_01862">
    <property type="entry name" value="16SrRNA_methyltr_C"/>
    <property type="match status" value="1"/>
</dbReference>
<dbReference type="InterPro" id="IPR002052">
    <property type="entry name" value="DNA_methylase_N6_adenine_CS"/>
</dbReference>
<dbReference type="InterPro" id="IPR013675">
    <property type="entry name" value="Mtase_sm_N"/>
</dbReference>
<dbReference type="InterPro" id="IPR023543">
    <property type="entry name" value="rRNA_ssu_MeTfrase_C"/>
</dbReference>
<dbReference type="InterPro" id="IPR046977">
    <property type="entry name" value="RsmC/RlmG"/>
</dbReference>
<dbReference type="InterPro" id="IPR029063">
    <property type="entry name" value="SAM-dependent_MTases_sf"/>
</dbReference>
<dbReference type="InterPro" id="IPR007848">
    <property type="entry name" value="Small_mtfrase_dom"/>
</dbReference>
<dbReference type="NCBIfam" id="NF007023">
    <property type="entry name" value="PRK09489.1"/>
    <property type="match status" value="1"/>
</dbReference>
<dbReference type="PANTHER" id="PTHR47816">
    <property type="entry name" value="RIBOSOMAL RNA SMALL SUBUNIT METHYLTRANSFERASE C"/>
    <property type="match status" value="1"/>
</dbReference>
<dbReference type="PANTHER" id="PTHR47816:SF4">
    <property type="entry name" value="RIBOSOMAL RNA SMALL SUBUNIT METHYLTRANSFERASE C"/>
    <property type="match status" value="1"/>
</dbReference>
<dbReference type="Pfam" id="PF05175">
    <property type="entry name" value="MTS"/>
    <property type="match status" value="1"/>
</dbReference>
<dbReference type="Pfam" id="PF08468">
    <property type="entry name" value="MTS_N"/>
    <property type="match status" value="1"/>
</dbReference>
<dbReference type="SUPFAM" id="SSF53335">
    <property type="entry name" value="S-adenosyl-L-methionine-dependent methyltransferases"/>
    <property type="match status" value="1"/>
</dbReference>
<sequence length="328" mass="36771">MISLESQVLQRHLSFFEHKSVLFAGGINDQFPQQVPARSVKVWSWYFDYAKSKSAVDFSLTCEEKADLMVFYWTKNKQEVQFQLMQLLAQAPIGQEMLIVGENRCGVRSVEKMLDAYGDIAKIDSARRCGLYHFCLKNTPHFALADYWKTYQHPRLGDLRIYSLPGVFSANELDVGTDLLLSTLDQPVRGKVLDLGCGAGVIGAYIKQQYPQVELTMADIHALALASSQRTLAENQLEAEVIASDVFSNVAGKFDLIISNPPFHDGIDTAYRAVSELIMQAKWHLVPGGELRIVANAFLPYPDLLDQHFGSHCVLAKTTKFKVYSVRG</sequence>
<proteinExistence type="inferred from homology"/>
<feature type="chain" id="PRO_0000369728" description="Ribosomal RNA small subunit methyltransferase C">
    <location>
        <begin position="1"/>
        <end position="328"/>
    </location>
</feature>
<reference key="1">
    <citation type="journal article" date="2001" name="Proc. Natl. Acad. Sci. U.S.A.">
        <title>Complete genomic sequence of Pasteurella multocida Pm70.</title>
        <authorList>
            <person name="May B.J."/>
            <person name="Zhang Q."/>
            <person name="Li L.L."/>
            <person name="Paustian M.L."/>
            <person name="Whittam T.S."/>
            <person name="Kapur V."/>
        </authorList>
    </citation>
    <scope>NUCLEOTIDE SEQUENCE [LARGE SCALE GENOMIC DNA]</scope>
    <source>
        <strain>Pm70</strain>
    </source>
</reference>
<keyword id="KW-0963">Cytoplasm</keyword>
<keyword id="KW-0489">Methyltransferase</keyword>
<keyword id="KW-1185">Reference proteome</keyword>
<keyword id="KW-0698">rRNA processing</keyword>
<keyword id="KW-0949">S-adenosyl-L-methionine</keyword>
<keyword id="KW-0808">Transferase</keyword>
<evidence type="ECO:0000255" key="1">
    <source>
        <dbReference type="HAMAP-Rule" id="MF_01862"/>
    </source>
</evidence>
<comment type="function">
    <text evidence="1">Specifically methylates the guanine in position 1207 of 16S rRNA in the 30S particle.</text>
</comment>
<comment type="catalytic activity">
    <reaction evidence="1">
        <text>guanosine(1207) in 16S rRNA + S-adenosyl-L-methionine = N(2)-methylguanosine(1207) in 16S rRNA + S-adenosyl-L-homocysteine + H(+)</text>
        <dbReference type="Rhea" id="RHEA:42736"/>
        <dbReference type="Rhea" id="RHEA-COMP:10213"/>
        <dbReference type="Rhea" id="RHEA-COMP:10214"/>
        <dbReference type="ChEBI" id="CHEBI:15378"/>
        <dbReference type="ChEBI" id="CHEBI:57856"/>
        <dbReference type="ChEBI" id="CHEBI:59789"/>
        <dbReference type="ChEBI" id="CHEBI:74269"/>
        <dbReference type="ChEBI" id="CHEBI:74481"/>
        <dbReference type="EC" id="2.1.1.172"/>
    </reaction>
</comment>
<comment type="subunit">
    <text evidence="1">Monomer.</text>
</comment>
<comment type="subcellular location">
    <subcellularLocation>
        <location evidence="1">Cytoplasm</location>
    </subcellularLocation>
</comment>
<comment type="similarity">
    <text evidence="1">Belongs to the methyltransferase superfamily. RsmC family.</text>
</comment>